<sequence length="240" mass="25705">MKMMDANEIISFIQKSEKKTPVKVYIKGDLKEVTFPETVQAFVNKKSGVLFGEWSEIKTILDENNKHIVDYVVENDRRNSAIPMLDLKGIKARIEPGAIIRDHVEIGDNAVIMMNATINIGAVIGEGSMIDMNAVLGGRATVGKNCHVGAGAVLAGVIEPPSAKPVIVEDDVVIGANVVVLEGVTVGKGAVVAAGAVVTEDVPPYTVVAGTPARVIKEIDEKTKAKTEIKQELRQLNPEK</sequence>
<evidence type="ECO:0000255" key="1">
    <source>
        <dbReference type="HAMAP-Rule" id="MF_01691"/>
    </source>
</evidence>
<organism>
    <name type="scientific">Bacillus cereus (strain G9842)</name>
    <dbReference type="NCBI Taxonomy" id="405531"/>
    <lineage>
        <taxon>Bacteria</taxon>
        <taxon>Bacillati</taxon>
        <taxon>Bacillota</taxon>
        <taxon>Bacilli</taxon>
        <taxon>Bacillales</taxon>
        <taxon>Bacillaceae</taxon>
        <taxon>Bacillus</taxon>
        <taxon>Bacillus cereus group</taxon>
    </lineage>
</organism>
<accession>B7IVL8</accession>
<feature type="chain" id="PRO_0000376631" description="2,3,4,5-tetrahydropyridine-2,6-dicarboxylate N-acetyltransferase">
    <location>
        <begin position="1"/>
        <end position="240"/>
    </location>
</feature>
<keyword id="KW-0012">Acyltransferase</keyword>
<keyword id="KW-0028">Amino-acid biosynthesis</keyword>
<keyword id="KW-0220">Diaminopimelate biosynthesis</keyword>
<keyword id="KW-0457">Lysine biosynthesis</keyword>
<keyword id="KW-0677">Repeat</keyword>
<keyword id="KW-0808">Transferase</keyword>
<dbReference type="EC" id="2.3.1.89" evidence="1"/>
<dbReference type="EMBL" id="CP001186">
    <property type="protein sequence ID" value="ACK97034.1"/>
    <property type="molecule type" value="Genomic_DNA"/>
</dbReference>
<dbReference type="SMR" id="B7IVL8"/>
<dbReference type="KEGG" id="bcg:BCG9842_B1156"/>
<dbReference type="HOGENOM" id="CLU_103751_0_0_9"/>
<dbReference type="UniPathway" id="UPA00034">
    <property type="reaction ID" value="UER00022"/>
</dbReference>
<dbReference type="Proteomes" id="UP000006744">
    <property type="component" value="Chromosome"/>
</dbReference>
<dbReference type="GO" id="GO:0047200">
    <property type="term" value="F:tetrahydrodipicolinate N-acetyltransferase activity"/>
    <property type="evidence" value="ECO:0007669"/>
    <property type="project" value="UniProtKB-EC"/>
</dbReference>
<dbReference type="GO" id="GO:0019877">
    <property type="term" value="P:diaminopimelate biosynthetic process"/>
    <property type="evidence" value="ECO:0007669"/>
    <property type="project" value="UniProtKB-UniRule"/>
</dbReference>
<dbReference type="GO" id="GO:0009089">
    <property type="term" value="P:lysine biosynthetic process via diaminopimelate"/>
    <property type="evidence" value="ECO:0007669"/>
    <property type="project" value="UniProtKB-UniRule"/>
</dbReference>
<dbReference type="CDD" id="cd03350">
    <property type="entry name" value="LbH_THP_succinylT"/>
    <property type="match status" value="1"/>
</dbReference>
<dbReference type="Gene3D" id="2.160.10.10">
    <property type="entry name" value="Hexapeptide repeat proteins"/>
    <property type="match status" value="1"/>
</dbReference>
<dbReference type="Gene3D" id="3.30.70.250">
    <property type="entry name" value="Malonyl-CoA ACP transacylase, ACP-binding"/>
    <property type="match status" value="1"/>
</dbReference>
<dbReference type="HAMAP" id="MF_01691">
    <property type="entry name" value="DapH"/>
    <property type="match status" value="1"/>
</dbReference>
<dbReference type="InterPro" id="IPR019873">
    <property type="entry name" value="DapH"/>
</dbReference>
<dbReference type="InterPro" id="IPR013710">
    <property type="entry name" value="DapH_N"/>
</dbReference>
<dbReference type="InterPro" id="IPR001451">
    <property type="entry name" value="Hexapep"/>
</dbReference>
<dbReference type="InterPro" id="IPR018357">
    <property type="entry name" value="Hexapep_transf_CS"/>
</dbReference>
<dbReference type="InterPro" id="IPR050179">
    <property type="entry name" value="Trans_hexapeptide_repeat"/>
</dbReference>
<dbReference type="InterPro" id="IPR011004">
    <property type="entry name" value="Trimer_LpxA-like_sf"/>
</dbReference>
<dbReference type="NCBIfam" id="TIGR03532">
    <property type="entry name" value="DapD_Ac"/>
    <property type="match status" value="1"/>
</dbReference>
<dbReference type="PANTHER" id="PTHR43300:SF10">
    <property type="entry name" value="2,3,4,5-TETRAHYDROPYRIDINE-2,6-DICARBOXYLATE N-ACETYLTRANSFERASE"/>
    <property type="match status" value="1"/>
</dbReference>
<dbReference type="PANTHER" id="PTHR43300">
    <property type="entry name" value="ACETYLTRANSFERASE"/>
    <property type="match status" value="1"/>
</dbReference>
<dbReference type="Pfam" id="PF08503">
    <property type="entry name" value="DapH_N"/>
    <property type="match status" value="1"/>
</dbReference>
<dbReference type="Pfam" id="PF00132">
    <property type="entry name" value="Hexapep"/>
    <property type="match status" value="1"/>
</dbReference>
<dbReference type="Pfam" id="PF14602">
    <property type="entry name" value="Hexapep_2"/>
    <property type="match status" value="1"/>
</dbReference>
<dbReference type="SUPFAM" id="SSF51161">
    <property type="entry name" value="Trimeric LpxA-like enzymes"/>
    <property type="match status" value="1"/>
</dbReference>
<dbReference type="PROSITE" id="PS00101">
    <property type="entry name" value="HEXAPEP_TRANSFERASES"/>
    <property type="match status" value="1"/>
</dbReference>
<gene>
    <name evidence="1" type="primary">dapH</name>
    <name type="ordered locus">BCG9842_B1156</name>
</gene>
<comment type="function">
    <text evidence="1">Catalyzes the transfer of an acetyl group from acetyl-CoA to tetrahydrodipicolinate.</text>
</comment>
<comment type="catalytic activity">
    <reaction evidence="1">
        <text>(S)-2,3,4,5-tetrahydrodipicolinate + acetyl-CoA + H2O = L-2-acetamido-6-oxoheptanedioate + CoA</text>
        <dbReference type="Rhea" id="RHEA:13085"/>
        <dbReference type="ChEBI" id="CHEBI:15377"/>
        <dbReference type="ChEBI" id="CHEBI:16845"/>
        <dbReference type="ChEBI" id="CHEBI:57287"/>
        <dbReference type="ChEBI" id="CHEBI:57288"/>
        <dbReference type="ChEBI" id="CHEBI:58117"/>
        <dbReference type="EC" id="2.3.1.89"/>
    </reaction>
</comment>
<comment type="pathway">
    <text evidence="1">Amino-acid biosynthesis; L-lysine biosynthesis via DAP pathway; LL-2,6-diaminopimelate from (S)-tetrahydrodipicolinate (acetylase route): step 1/3.</text>
</comment>
<comment type="similarity">
    <text evidence="1">Belongs to the transferase hexapeptide repeat family. DapH subfamily.</text>
</comment>
<proteinExistence type="inferred from homology"/>
<reference key="1">
    <citation type="submission" date="2008-10" db="EMBL/GenBank/DDBJ databases">
        <title>Genome sequence of Bacillus cereus G9842.</title>
        <authorList>
            <person name="Dodson R.J."/>
            <person name="Durkin A.S."/>
            <person name="Rosovitz M.J."/>
            <person name="Rasko D.A."/>
            <person name="Hoffmaster A."/>
            <person name="Ravel J."/>
            <person name="Sutton G."/>
        </authorList>
    </citation>
    <scope>NUCLEOTIDE SEQUENCE [LARGE SCALE GENOMIC DNA]</scope>
    <source>
        <strain>G9842</strain>
    </source>
</reference>
<protein>
    <recommendedName>
        <fullName evidence="1">2,3,4,5-tetrahydropyridine-2,6-dicarboxylate N-acetyltransferase</fullName>
        <ecNumber evidence="1">2.3.1.89</ecNumber>
    </recommendedName>
    <alternativeName>
        <fullName evidence="1">Tetrahydrodipicolinate N-acetyltransferase</fullName>
        <shortName evidence="1">THP acetyltransferase</shortName>
        <shortName evidence="1">Tetrahydropicolinate acetylase</shortName>
    </alternativeName>
</protein>
<name>DAPH_BACC2</name>